<organism>
    <name type="scientific">Haemophilus influenzae (strain ATCC 51907 / DSM 11121 / KW20 / Rd)</name>
    <dbReference type="NCBI Taxonomy" id="71421"/>
    <lineage>
        <taxon>Bacteria</taxon>
        <taxon>Pseudomonadati</taxon>
        <taxon>Pseudomonadota</taxon>
        <taxon>Gammaproteobacteria</taxon>
        <taxon>Pasteurellales</taxon>
        <taxon>Pasteurellaceae</taxon>
        <taxon>Haemophilus</taxon>
    </lineage>
</organism>
<sequence>MIKLSTVQLAQILQAKLIGDENVQVEKINTDTRKSVSNSLFFALKGEKFDAHQYLDQAVSQGALALVVQQENSSISVPQLVVKDTRIALGELAKWLREKINPRTVAMTGSSGKTTVKEMTASILQHTAADSEAVLFTNGNFNNDIGVPLTLLRLTEKHRFAVIELGANHQNEINYTTKLVQPNAALINNIAPAHLEGFGSLAGVVQAKGEIYRGLTKNGVAIINAEHNHLDIWQKEISNHAIQYFNGKDYSAKNIHHTSQGSTFTLISPQGEIEITLPYLGEHNVKNALAATALAMNVGATLTDVKAGLEQRSQVKGRLFPIQVTPNLLLLDDTYNANKDSLCAAIDVLKGYDAFRILCVGDMKELGENSLAIHREVGQYINLVNLDLVCSYGNESAVISEAVSGKHFTDKTEMVDFLVPLIENQLQQNKKVVVLGKGSRSMKMEDVIYSLKDKIKC</sequence>
<accession>P45061</accession>
<protein>
    <recommendedName>
        <fullName evidence="1">UDP-N-acetylmuramoyl-tripeptide--D-alanyl-D-alanine ligase</fullName>
        <ecNumber evidence="1">6.3.2.10</ecNumber>
    </recommendedName>
    <alternativeName>
        <fullName evidence="1">D-alanyl-D-alanine-adding enzyme</fullName>
    </alternativeName>
    <alternativeName>
        <fullName>UDP-MurNAc-pentapeptide synthetase</fullName>
    </alternativeName>
</protein>
<name>MURF_HAEIN</name>
<gene>
    <name evidence="1" type="primary">murF</name>
    <name type="ordered locus">HI_1134</name>
</gene>
<evidence type="ECO:0000255" key="1">
    <source>
        <dbReference type="HAMAP-Rule" id="MF_02019"/>
    </source>
</evidence>
<keyword id="KW-0067">ATP-binding</keyword>
<keyword id="KW-0131">Cell cycle</keyword>
<keyword id="KW-0132">Cell division</keyword>
<keyword id="KW-0133">Cell shape</keyword>
<keyword id="KW-0961">Cell wall biogenesis/degradation</keyword>
<keyword id="KW-0963">Cytoplasm</keyword>
<keyword id="KW-0436">Ligase</keyword>
<keyword id="KW-0547">Nucleotide-binding</keyword>
<keyword id="KW-0573">Peptidoglycan synthesis</keyword>
<keyword id="KW-1185">Reference proteome</keyword>
<dbReference type="EC" id="6.3.2.10" evidence="1"/>
<dbReference type="EMBL" id="L42023">
    <property type="protein sequence ID" value="AAC22789.1"/>
    <property type="molecule type" value="Genomic_DNA"/>
</dbReference>
<dbReference type="PIR" id="I64184">
    <property type="entry name" value="I64184"/>
</dbReference>
<dbReference type="RefSeq" id="NP_439292.1">
    <property type="nucleotide sequence ID" value="NC_000907.1"/>
</dbReference>
<dbReference type="SMR" id="P45061"/>
<dbReference type="STRING" id="71421.HI_1134"/>
<dbReference type="EnsemblBacteria" id="AAC22789">
    <property type="protein sequence ID" value="AAC22789"/>
    <property type="gene ID" value="HI_1134"/>
</dbReference>
<dbReference type="KEGG" id="hin:HI_1134"/>
<dbReference type="PATRIC" id="fig|71421.8.peg.1184"/>
<dbReference type="eggNOG" id="COG0770">
    <property type="taxonomic scope" value="Bacteria"/>
</dbReference>
<dbReference type="HOGENOM" id="CLU_031507_4_0_6"/>
<dbReference type="OrthoDB" id="9801978at2"/>
<dbReference type="PhylomeDB" id="P45061"/>
<dbReference type="BioCyc" id="HINF71421:G1GJ1-1167-MONOMER"/>
<dbReference type="UniPathway" id="UPA00219"/>
<dbReference type="Proteomes" id="UP000000579">
    <property type="component" value="Chromosome"/>
</dbReference>
<dbReference type="GO" id="GO:0005737">
    <property type="term" value="C:cytoplasm"/>
    <property type="evidence" value="ECO:0007669"/>
    <property type="project" value="UniProtKB-SubCell"/>
</dbReference>
<dbReference type="GO" id="GO:0005524">
    <property type="term" value="F:ATP binding"/>
    <property type="evidence" value="ECO:0007669"/>
    <property type="project" value="UniProtKB-UniRule"/>
</dbReference>
<dbReference type="GO" id="GO:0047480">
    <property type="term" value="F:UDP-N-acetylmuramoyl-tripeptide-D-alanyl-D-alanine ligase activity"/>
    <property type="evidence" value="ECO:0007669"/>
    <property type="project" value="UniProtKB-UniRule"/>
</dbReference>
<dbReference type="GO" id="GO:0008766">
    <property type="term" value="F:UDP-N-acetylmuramoylalanyl-D-glutamyl-2,6-diaminopimelate-D-alanyl-D-alanine ligase activity"/>
    <property type="evidence" value="ECO:0007669"/>
    <property type="project" value="RHEA"/>
</dbReference>
<dbReference type="GO" id="GO:0051301">
    <property type="term" value="P:cell division"/>
    <property type="evidence" value="ECO:0007669"/>
    <property type="project" value="UniProtKB-KW"/>
</dbReference>
<dbReference type="GO" id="GO:0071555">
    <property type="term" value="P:cell wall organization"/>
    <property type="evidence" value="ECO:0007669"/>
    <property type="project" value="UniProtKB-KW"/>
</dbReference>
<dbReference type="GO" id="GO:0009252">
    <property type="term" value="P:peptidoglycan biosynthetic process"/>
    <property type="evidence" value="ECO:0007669"/>
    <property type="project" value="UniProtKB-UniRule"/>
</dbReference>
<dbReference type="GO" id="GO:0008360">
    <property type="term" value="P:regulation of cell shape"/>
    <property type="evidence" value="ECO:0007669"/>
    <property type="project" value="UniProtKB-KW"/>
</dbReference>
<dbReference type="Gene3D" id="3.90.190.20">
    <property type="entry name" value="Mur ligase, C-terminal domain"/>
    <property type="match status" value="1"/>
</dbReference>
<dbReference type="Gene3D" id="3.40.1190.10">
    <property type="entry name" value="Mur-like, catalytic domain"/>
    <property type="match status" value="1"/>
</dbReference>
<dbReference type="Gene3D" id="3.40.1390.10">
    <property type="entry name" value="MurE/MurF, N-terminal domain"/>
    <property type="match status" value="1"/>
</dbReference>
<dbReference type="HAMAP" id="MF_02019">
    <property type="entry name" value="MurF"/>
    <property type="match status" value="1"/>
</dbReference>
<dbReference type="InterPro" id="IPR036565">
    <property type="entry name" value="Mur-like_cat_sf"/>
</dbReference>
<dbReference type="InterPro" id="IPR004101">
    <property type="entry name" value="Mur_ligase_C"/>
</dbReference>
<dbReference type="InterPro" id="IPR036615">
    <property type="entry name" value="Mur_ligase_C_dom_sf"/>
</dbReference>
<dbReference type="InterPro" id="IPR013221">
    <property type="entry name" value="Mur_ligase_cen"/>
</dbReference>
<dbReference type="InterPro" id="IPR051046">
    <property type="entry name" value="MurCDEF_CellWall_CoF430Synth"/>
</dbReference>
<dbReference type="InterPro" id="IPR035911">
    <property type="entry name" value="MurE/MurF_N"/>
</dbReference>
<dbReference type="InterPro" id="IPR005863">
    <property type="entry name" value="UDP-N-AcMur_synth"/>
</dbReference>
<dbReference type="NCBIfam" id="TIGR01143">
    <property type="entry name" value="murF"/>
    <property type="match status" value="1"/>
</dbReference>
<dbReference type="NCBIfam" id="NF008041">
    <property type="entry name" value="PRK10773.1"/>
    <property type="match status" value="1"/>
</dbReference>
<dbReference type="PANTHER" id="PTHR43024">
    <property type="entry name" value="UDP-N-ACETYLMURAMOYL-TRIPEPTIDE--D-ALANYL-D-ALANINE LIGASE"/>
    <property type="match status" value="1"/>
</dbReference>
<dbReference type="PANTHER" id="PTHR43024:SF1">
    <property type="entry name" value="UDP-N-ACETYLMURAMOYL-TRIPEPTIDE--D-ALANYL-D-ALANINE LIGASE"/>
    <property type="match status" value="1"/>
</dbReference>
<dbReference type="Pfam" id="PF02875">
    <property type="entry name" value="Mur_ligase_C"/>
    <property type="match status" value="1"/>
</dbReference>
<dbReference type="Pfam" id="PF08245">
    <property type="entry name" value="Mur_ligase_M"/>
    <property type="match status" value="1"/>
</dbReference>
<dbReference type="SUPFAM" id="SSF53623">
    <property type="entry name" value="MurD-like peptide ligases, catalytic domain"/>
    <property type="match status" value="1"/>
</dbReference>
<dbReference type="SUPFAM" id="SSF53244">
    <property type="entry name" value="MurD-like peptide ligases, peptide-binding domain"/>
    <property type="match status" value="1"/>
</dbReference>
<dbReference type="SUPFAM" id="SSF63418">
    <property type="entry name" value="MurE/MurF N-terminal domain"/>
    <property type="match status" value="1"/>
</dbReference>
<proteinExistence type="inferred from homology"/>
<reference key="1">
    <citation type="journal article" date="1995" name="Science">
        <title>Whole-genome random sequencing and assembly of Haemophilus influenzae Rd.</title>
        <authorList>
            <person name="Fleischmann R.D."/>
            <person name="Adams M.D."/>
            <person name="White O."/>
            <person name="Clayton R.A."/>
            <person name="Kirkness E.F."/>
            <person name="Kerlavage A.R."/>
            <person name="Bult C.J."/>
            <person name="Tomb J.-F."/>
            <person name="Dougherty B.A."/>
            <person name="Merrick J.M."/>
            <person name="McKenney K."/>
            <person name="Sutton G.G."/>
            <person name="FitzHugh W."/>
            <person name="Fields C.A."/>
            <person name="Gocayne J.D."/>
            <person name="Scott J.D."/>
            <person name="Shirley R."/>
            <person name="Liu L.-I."/>
            <person name="Glodek A."/>
            <person name="Kelley J.M."/>
            <person name="Weidman J.F."/>
            <person name="Phillips C.A."/>
            <person name="Spriggs T."/>
            <person name="Hedblom E."/>
            <person name="Cotton M.D."/>
            <person name="Utterback T.R."/>
            <person name="Hanna M.C."/>
            <person name="Nguyen D.T."/>
            <person name="Saudek D.M."/>
            <person name="Brandon R.C."/>
            <person name="Fine L.D."/>
            <person name="Fritchman J.L."/>
            <person name="Fuhrmann J.L."/>
            <person name="Geoghagen N.S.M."/>
            <person name="Gnehm C.L."/>
            <person name="McDonald L.A."/>
            <person name="Small K.V."/>
            <person name="Fraser C.M."/>
            <person name="Smith H.O."/>
            <person name="Venter J.C."/>
        </authorList>
    </citation>
    <scope>NUCLEOTIDE SEQUENCE [LARGE SCALE GENOMIC DNA]</scope>
    <source>
        <strain>ATCC 51907 / DSM 11121 / KW20 / Rd</strain>
    </source>
</reference>
<feature type="chain" id="PRO_0000101699" description="UDP-N-acetylmuramoyl-tripeptide--D-alanyl-D-alanine ligase">
    <location>
        <begin position="1"/>
        <end position="457"/>
    </location>
</feature>
<feature type="binding site" evidence="1">
    <location>
        <begin position="109"/>
        <end position="115"/>
    </location>
    <ligand>
        <name>ATP</name>
        <dbReference type="ChEBI" id="CHEBI:30616"/>
    </ligand>
</feature>
<comment type="function">
    <text evidence="1">Involved in cell wall formation. Catalyzes the final step in the synthesis of UDP-N-acetylmuramoyl-pentapeptide, the precursor of murein.</text>
</comment>
<comment type="catalytic activity">
    <reaction evidence="1">
        <text>D-alanyl-D-alanine + UDP-N-acetyl-alpha-D-muramoyl-L-alanyl-gamma-D-glutamyl-meso-2,6-diaminopimelate + ATP = UDP-N-acetyl-alpha-D-muramoyl-L-alanyl-gamma-D-glutamyl-meso-2,6-diaminopimeloyl-D-alanyl-D-alanine + ADP + phosphate + H(+)</text>
        <dbReference type="Rhea" id="RHEA:28374"/>
        <dbReference type="ChEBI" id="CHEBI:15378"/>
        <dbReference type="ChEBI" id="CHEBI:30616"/>
        <dbReference type="ChEBI" id="CHEBI:43474"/>
        <dbReference type="ChEBI" id="CHEBI:57822"/>
        <dbReference type="ChEBI" id="CHEBI:61386"/>
        <dbReference type="ChEBI" id="CHEBI:83905"/>
        <dbReference type="ChEBI" id="CHEBI:456216"/>
        <dbReference type="EC" id="6.3.2.10"/>
    </reaction>
</comment>
<comment type="pathway">
    <text evidence="1">Cell wall biogenesis; peptidoglycan biosynthesis.</text>
</comment>
<comment type="subcellular location">
    <subcellularLocation>
        <location evidence="1">Cytoplasm</location>
    </subcellularLocation>
</comment>
<comment type="similarity">
    <text evidence="1">Belongs to the MurCDEF family. MurF subfamily.</text>
</comment>